<proteinExistence type="inferred from homology"/>
<protein>
    <recommendedName>
        <fullName evidence="1">Transcriptional repressor NrdR</fullName>
    </recommendedName>
</protein>
<keyword id="KW-0067">ATP-binding</keyword>
<keyword id="KW-0238">DNA-binding</keyword>
<keyword id="KW-0479">Metal-binding</keyword>
<keyword id="KW-0547">Nucleotide-binding</keyword>
<keyword id="KW-0678">Repressor</keyword>
<keyword id="KW-0804">Transcription</keyword>
<keyword id="KW-0805">Transcription regulation</keyword>
<keyword id="KW-0862">Zinc</keyword>
<keyword id="KW-0863">Zinc-finger</keyword>
<accession>Q39J71</accession>
<evidence type="ECO:0000255" key="1">
    <source>
        <dbReference type="HAMAP-Rule" id="MF_00440"/>
    </source>
</evidence>
<sequence>MRCPFCRHDDTQVVDSRVSEDGAAIRRRRRCSACDKRFTTYERVELSLPFVVKKDGSRTEFDRRKIVASMQLALRKRPVAADAIDAAVARIEYQLLATGEREVRSEKLGELVMNELRGLDTIAYVRFASVYRRFEDVSEFADVIEEFRRASPAKTPRKR</sequence>
<reference key="1">
    <citation type="submission" date="2005-10" db="EMBL/GenBank/DDBJ databases">
        <title>Complete sequence of chromosome 1 of Burkholderia sp. 383.</title>
        <authorList>
            <consortium name="US DOE Joint Genome Institute"/>
            <person name="Copeland A."/>
            <person name="Lucas S."/>
            <person name="Lapidus A."/>
            <person name="Barry K."/>
            <person name="Detter J.C."/>
            <person name="Glavina T."/>
            <person name="Hammon N."/>
            <person name="Israni S."/>
            <person name="Pitluck S."/>
            <person name="Chain P."/>
            <person name="Malfatti S."/>
            <person name="Shin M."/>
            <person name="Vergez L."/>
            <person name="Schmutz J."/>
            <person name="Larimer F."/>
            <person name="Land M."/>
            <person name="Kyrpides N."/>
            <person name="Lykidis A."/>
            <person name="Richardson P."/>
        </authorList>
    </citation>
    <scope>NUCLEOTIDE SEQUENCE [LARGE SCALE GENOMIC DNA]</scope>
    <source>
        <strain>ATCC 17760 / DSM 23089 / LMG 22485 / NCIMB 9086 / R18194 / 383</strain>
    </source>
</reference>
<dbReference type="EMBL" id="CP000151">
    <property type="protein sequence ID" value="ABB07495.1"/>
    <property type="molecule type" value="Genomic_DNA"/>
</dbReference>
<dbReference type="RefSeq" id="WP_006476792.1">
    <property type="nucleotide sequence ID" value="NZ_WNDV01000045.1"/>
</dbReference>
<dbReference type="SMR" id="Q39J71"/>
<dbReference type="GeneID" id="93192949"/>
<dbReference type="KEGG" id="bur:Bcep18194_A3896"/>
<dbReference type="HOGENOM" id="CLU_108412_0_0_4"/>
<dbReference type="Proteomes" id="UP000002705">
    <property type="component" value="Chromosome 1"/>
</dbReference>
<dbReference type="GO" id="GO:0005524">
    <property type="term" value="F:ATP binding"/>
    <property type="evidence" value="ECO:0007669"/>
    <property type="project" value="UniProtKB-KW"/>
</dbReference>
<dbReference type="GO" id="GO:0003677">
    <property type="term" value="F:DNA binding"/>
    <property type="evidence" value="ECO:0007669"/>
    <property type="project" value="UniProtKB-KW"/>
</dbReference>
<dbReference type="GO" id="GO:0008270">
    <property type="term" value="F:zinc ion binding"/>
    <property type="evidence" value="ECO:0007669"/>
    <property type="project" value="UniProtKB-UniRule"/>
</dbReference>
<dbReference type="GO" id="GO:0045892">
    <property type="term" value="P:negative regulation of DNA-templated transcription"/>
    <property type="evidence" value="ECO:0007669"/>
    <property type="project" value="UniProtKB-UniRule"/>
</dbReference>
<dbReference type="HAMAP" id="MF_00440">
    <property type="entry name" value="NrdR"/>
    <property type="match status" value="1"/>
</dbReference>
<dbReference type="InterPro" id="IPR005144">
    <property type="entry name" value="ATP-cone_dom"/>
</dbReference>
<dbReference type="InterPro" id="IPR055173">
    <property type="entry name" value="NrdR-like_N"/>
</dbReference>
<dbReference type="InterPro" id="IPR003796">
    <property type="entry name" value="RNR_NrdR-like"/>
</dbReference>
<dbReference type="NCBIfam" id="TIGR00244">
    <property type="entry name" value="transcriptional regulator NrdR"/>
    <property type="match status" value="1"/>
</dbReference>
<dbReference type="PANTHER" id="PTHR30455">
    <property type="entry name" value="TRANSCRIPTIONAL REPRESSOR NRDR"/>
    <property type="match status" value="1"/>
</dbReference>
<dbReference type="PANTHER" id="PTHR30455:SF2">
    <property type="entry name" value="TRANSCRIPTIONAL REPRESSOR NRDR"/>
    <property type="match status" value="1"/>
</dbReference>
<dbReference type="Pfam" id="PF03477">
    <property type="entry name" value="ATP-cone"/>
    <property type="match status" value="1"/>
</dbReference>
<dbReference type="Pfam" id="PF22811">
    <property type="entry name" value="Zn_ribbon_NrdR"/>
    <property type="match status" value="1"/>
</dbReference>
<dbReference type="PROSITE" id="PS51161">
    <property type="entry name" value="ATP_CONE"/>
    <property type="match status" value="1"/>
</dbReference>
<name>NRDR_BURL3</name>
<feature type="chain" id="PRO_0000230859" description="Transcriptional repressor NrdR">
    <location>
        <begin position="1"/>
        <end position="159"/>
    </location>
</feature>
<feature type="domain" description="ATP-cone" evidence="1">
    <location>
        <begin position="49"/>
        <end position="139"/>
    </location>
</feature>
<feature type="zinc finger region" evidence="1">
    <location>
        <begin position="3"/>
        <end position="34"/>
    </location>
</feature>
<organism>
    <name type="scientific">Burkholderia lata (strain ATCC 17760 / DSM 23089 / LMG 22485 / NCIMB 9086 / R18194 / 383)</name>
    <dbReference type="NCBI Taxonomy" id="482957"/>
    <lineage>
        <taxon>Bacteria</taxon>
        <taxon>Pseudomonadati</taxon>
        <taxon>Pseudomonadota</taxon>
        <taxon>Betaproteobacteria</taxon>
        <taxon>Burkholderiales</taxon>
        <taxon>Burkholderiaceae</taxon>
        <taxon>Burkholderia</taxon>
        <taxon>Burkholderia cepacia complex</taxon>
    </lineage>
</organism>
<gene>
    <name evidence="1" type="primary">nrdR</name>
    <name type="ordered locus">Bcep18194_A3896</name>
</gene>
<comment type="function">
    <text evidence="1">Negatively regulates transcription of bacterial ribonucleotide reductase nrd genes and operons by binding to NrdR-boxes.</text>
</comment>
<comment type="cofactor">
    <cofactor evidence="1">
        <name>Zn(2+)</name>
        <dbReference type="ChEBI" id="CHEBI:29105"/>
    </cofactor>
    <text evidence="1">Binds 1 zinc ion.</text>
</comment>
<comment type="similarity">
    <text evidence="1">Belongs to the NrdR family.</text>
</comment>